<organism>
    <name type="scientific">Maricaulis maris (strain MCS10)</name>
    <name type="common">Caulobacter maris</name>
    <dbReference type="NCBI Taxonomy" id="394221"/>
    <lineage>
        <taxon>Bacteria</taxon>
        <taxon>Pseudomonadati</taxon>
        <taxon>Pseudomonadota</taxon>
        <taxon>Alphaproteobacteria</taxon>
        <taxon>Maricaulales</taxon>
        <taxon>Maricaulaceae</taxon>
        <taxon>Maricaulis</taxon>
    </lineage>
</organism>
<proteinExistence type="inferred from homology"/>
<name>RS21_MARMM</name>
<dbReference type="EMBL" id="CP000449">
    <property type="protein sequence ID" value="ABI66848.1"/>
    <property type="molecule type" value="Genomic_DNA"/>
</dbReference>
<dbReference type="SMR" id="Q0ALJ5"/>
<dbReference type="STRING" id="394221.Mmar10_2562"/>
<dbReference type="KEGG" id="mmr:Mmar10_2562"/>
<dbReference type="eggNOG" id="COG0828">
    <property type="taxonomic scope" value="Bacteria"/>
</dbReference>
<dbReference type="HOGENOM" id="CLU_159258_0_1_5"/>
<dbReference type="OrthoDB" id="9811907at2"/>
<dbReference type="Proteomes" id="UP000001964">
    <property type="component" value="Chromosome"/>
</dbReference>
<dbReference type="GO" id="GO:1990904">
    <property type="term" value="C:ribonucleoprotein complex"/>
    <property type="evidence" value="ECO:0007669"/>
    <property type="project" value="UniProtKB-KW"/>
</dbReference>
<dbReference type="GO" id="GO:0005840">
    <property type="term" value="C:ribosome"/>
    <property type="evidence" value="ECO:0007669"/>
    <property type="project" value="UniProtKB-KW"/>
</dbReference>
<dbReference type="GO" id="GO:0003735">
    <property type="term" value="F:structural constituent of ribosome"/>
    <property type="evidence" value="ECO:0007669"/>
    <property type="project" value="InterPro"/>
</dbReference>
<dbReference type="GO" id="GO:0006412">
    <property type="term" value="P:translation"/>
    <property type="evidence" value="ECO:0007669"/>
    <property type="project" value="UniProtKB-UniRule"/>
</dbReference>
<dbReference type="Gene3D" id="1.20.5.1150">
    <property type="entry name" value="Ribosomal protein S8"/>
    <property type="match status" value="1"/>
</dbReference>
<dbReference type="HAMAP" id="MF_00358">
    <property type="entry name" value="Ribosomal_bS21"/>
    <property type="match status" value="1"/>
</dbReference>
<dbReference type="InterPro" id="IPR001911">
    <property type="entry name" value="Ribosomal_bS21"/>
</dbReference>
<dbReference type="InterPro" id="IPR018278">
    <property type="entry name" value="Ribosomal_bS21_CS"/>
</dbReference>
<dbReference type="InterPro" id="IPR038380">
    <property type="entry name" value="Ribosomal_bS21_sf"/>
</dbReference>
<dbReference type="NCBIfam" id="TIGR00030">
    <property type="entry name" value="S21p"/>
    <property type="match status" value="1"/>
</dbReference>
<dbReference type="PANTHER" id="PTHR21109">
    <property type="entry name" value="MITOCHONDRIAL 28S RIBOSOMAL PROTEIN S21"/>
    <property type="match status" value="1"/>
</dbReference>
<dbReference type="PANTHER" id="PTHR21109:SF0">
    <property type="entry name" value="SMALL RIBOSOMAL SUBUNIT PROTEIN BS21M"/>
    <property type="match status" value="1"/>
</dbReference>
<dbReference type="Pfam" id="PF01165">
    <property type="entry name" value="Ribosomal_S21"/>
    <property type="match status" value="1"/>
</dbReference>
<dbReference type="PRINTS" id="PR00976">
    <property type="entry name" value="RIBOSOMALS21"/>
</dbReference>
<dbReference type="PROSITE" id="PS01181">
    <property type="entry name" value="RIBOSOMAL_S21"/>
    <property type="match status" value="1"/>
</dbReference>
<protein>
    <recommendedName>
        <fullName evidence="1">Small ribosomal subunit protein bS21</fullName>
    </recommendedName>
    <alternativeName>
        <fullName evidence="3">30S ribosomal protein S21</fullName>
    </alternativeName>
</protein>
<gene>
    <name evidence="1" type="primary">rpsU</name>
    <name type="ordered locus">Mmar10_2562</name>
</gene>
<evidence type="ECO:0000255" key="1">
    <source>
        <dbReference type="HAMAP-Rule" id="MF_00358"/>
    </source>
</evidence>
<evidence type="ECO:0000256" key="2">
    <source>
        <dbReference type="SAM" id="MobiDB-lite"/>
    </source>
</evidence>
<evidence type="ECO:0000305" key="3"/>
<reference key="1">
    <citation type="submission" date="2006-08" db="EMBL/GenBank/DDBJ databases">
        <title>Complete sequence of Maricaulis maris MCS10.</title>
        <authorList>
            <consortium name="US DOE Joint Genome Institute"/>
            <person name="Copeland A."/>
            <person name="Lucas S."/>
            <person name="Lapidus A."/>
            <person name="Barry K."/>
            <person name="Detter J.C."/>
            <person name="Glavina del Rio T."/>
            <person name="Hammon N."/>
            <person name="Israni S."/>
            <person name="Dalin E."/>
            <person name="Tice H."/>
            <person name="Pitluck S."/>
            <person name="Saunders E."/>
            <person name="Brettin T."/>
            <person name="Bruce D."/>
            <person name="Han C."/>
            <person name="Tapia R."/>
            <person name="Gilna P."/>
            <person name="Schmutz J."/>
            <person name="Larimer F."/>
            <person name="Land M."/>
            <person name="Hauser L."/>
            <person name="Kyrpides N."/>
            <person name="Mikhailova N."/>
            <person name="Viollier P."/>
            <person name="Stephens C."/>
            <person name="Richardson P."/>
        </authorList>
    </citation>
    <scope>NUCLEOTIDE SEQUENCE [LARGE SCALE GENOMIC DNA]</scope>
    <source>
        <strain>MCS10</strain>
    </source>
</reference>
<feature type="chain" id="PRO_0000266702" description="Small ribosomal subunit protein bS21">
    <location>
        <begin position="1"/>
        <end position="92"/>
    </location>
</feature>
<feature type="region of interest" description="Disordered" evidence="2">
    <location>
        <begin position="37"/>
        <end position="92"/>
    </location>
</feature>
<feature type="compositionally biased region" description="Basic and acidic residues" evidence="2">
    <location>
        <begin position="51"/>
        <end position="67"/>
    </location>
</feature>
<feature type="compositionally biased region" description="Basic residues" evidence="2">
    <location>
        <begin position="68"/>
        <end position="77"/>
    </location>
</feature>
<comment type="similarity">
    <text evidence="1">Belongs to the bacterial ribosomal protein bS21 family.</text>
</comment>
<keyword id="KW-1185">Reference proteome</keyword>
<keyword id="KW-0687">Ribonucleoprotein</keyword>
<keyword id="KW-0689">Ribosomal protein</keyword>
<accession>Q0ALJ5</accession>
<sequence length="92" mass="10860">MRNGPRVQPNGERAIVQIVVRDNNVEQALRALKKKMQREGTFREMKRRNHYEKPSEKKARQKAEAIRRARKLARKRAQREGLIAKRGGTTRR</sequence>